<feature type="chain" id="PRO_0000334575" description="Callose synthase 3">
    <location>
        <begin position="1"/>
        <end position="1955"/>
    </location>
</feature>
<feature type="topological domain" description="Cytoplasmic" evidence="2">
    <location>
        <begin position="1"/>
        <end position="488"/>
    </location>
</feature>
<feature type="transmembrane region" description="Helical" evidence="2">
    <location>
        <begin position="489"/>
        <end position="509"/>
    </location>
</feature>
<feature type="topological domain" description="Extracellular" evidence="2">
    <location>
        <begin position="510"/>
        <end position="521"/>
    </location>
</feature>
<feature type="transmembrane region" description="Helical" evidence="2">
    <location>
        <begin position="522"/>
        <end position="542"/>
    </location>
</feature>
<feature type="topological domain" description="Cytoplasmic" evidence="2">
    <location>
        <begin position="543"/>
        <end position="558"/>
    </location>
</feature>
<feature type="transmembrane region" description="Helical" evidence="2">
    <location>
        <begin position="559"/>
        <end position="579"/>
    </location>
</feature>
<feature type="topological domain" description="Extracellular" evidence="2">
    <location>
        <begin position="580"/>
        <end position="604"/>
    </location>
</feature>
<feature type="transmembrane region" description="Helical" evidence="2">
    <location>
        <begin position="605"/>
        <end position="625"/>
    </location>
</feature>
<feature type="topological domain" description="Cytoplasmic" evidence="2">
    <location>
        <begin position="626"/>
        <end position="660"/>
    </location>
</feature>
<feature type="transmembrane region" description="Helical" evidence="2">
    <location>
        <begin position="661"/>
        <end position="681"/>
    </location>
</feature>
<feature type="topological domain" description="Extracellular" evidence="2">
    <location>
        <begin position="682"/>
        <end position="717"/>
    </location>
</feature>
<feature type="transmembrane region" description="Helical" evidence="2">
    <location>
        <begin position="718"/>
        <end position="738"/>
    </location>
</feature>
<feature type="topological domain" description="Cytoplasmic" evidence="2">
    <location>
        <begin position="739"/>
        <end position="1517"/>
    </location>
</feature>
<feature type="transmembrane region" description="Helical" evidence="2">
    <location>
        <begin position="1518"/>
        <end position="1538"/>
    </location>
</feature>
<feature type="topological domain" description="Extracellular" evidence="2">
    <location>
        <begin position="1539"/>
        <end position="1566"/>
    </location>
</feature>
<feature type="transmembrane region" description="Helical" evidence="2">
    <location>
        <begin position="1567"/>
        <end position="1587"/>
    </location>
</feature>
<feature type="topological domain" description="Cytoplasmic" evidence="2">
    <location>
        <begin position="1588"/>
        <end position="1597"/>
    </location>
</feature>
<feature type="transmembrane region" description="Helical" evidence="2">
    <location>
        <begin position="1598"/>
        <end position="1618"/>
    </location>
</feature>
<feature type="topological domain" description="Extracellular" evidence="2">
    <location>
        <begin position="1619"/>
        <end position="1661"/>
    </location>
</feature>
<feature type="transmembrane region" description="Helical" evidence="2">
    <location>
        <begin position="1662"/>
        <end position="1682"/>
    </location>
</feature>
<feature type="topological domain" description="Cytoplasmic" evidence="2">
    <location>
        <begin position="1683"/>
        <end position="1688"/>
    </location>
</feature>
<feature type="transmembrane region" description="Helical" evidence="2">
    <location>
        <begin position="1689"/>
        <end position="1709"/>
    </location>
</feature>
<feature type="topological domain" description="Extracellular" evidence="2">
    <location>
        <begin position="1710"/>
        <end position="1761"/>
    </location>
</feature>
<feature type="transmembrane region" description="Helical" evidence="2">
    <location>
        <begin position="1762"/>
        <end position="1782"/>
    </location>
</feature>
<feature type="topological domain" description="Cytoplasmic" evidence="2">
    <location>
        <begin position="1783"/>
        <end position="1792"/>
    </location>
</feature>
<feature type="transmembrane region" description="Helical" evidence="2">
    <location>
        <begin position="1793"/>
        <end position="1813"/>
    </location>
</feature>
<feature type="topological domain" description="Extracellular" evidence="2">
    <location>
        <begin position="1814"/>
        <end position="1833"/>
    </location>
</feature>
<feature type="transmembrane region" description="Helical" evidence="2">
    <location>
        <begin position="1834"/>
        <end position="1854"/>
    </location>
</feature>
<feature type="topological domain" description="Cytoplasmic" evidence="2">
    <location>
        <begin position="1855"/>
        <end position="1856"/>
    </location>
</feature>
<feature type="transmembrane region" description="Helical" evidence="2">
    <location>
        <begin position="1857"/>
        <end position="1877"/>
    </location>
</feature>
<feature type="topological domain" description="Extracellular" evidence="2">
    <location>
        <begin position="1878"/>
        <end position="1899"/>
    </location>
</feature>
<feature type="transmembrane region" description="Helical" evidence="2">
    <location>
        <begin position="1900"/>
        <end position="1920"/>
    </location>
</feature>
<feature type="topological domain" description="Cytoplasmic" evidence="2">
    <location>
        <begin position="1921"/>
        <end position="1955"/>
    </location>
</feature>
<protein>
    <recommendedName>
        <fullName>Callose synthase 3</fullName>
        <ecNumber>2.4.1.34</ecNumber>
    </recommendedName>
    <alternativeName>
        <fullName>1,3-beta-glucan synthase</fullName>
    </alternativeName>
    <alternativeName>
        <fullName>Protein GLUCAN SYNTHASE-LIKE 12</fullName>
    </alternativeName>
</protein>
<proteinExistence type="inferred from homology"/>
<keyword id="KW-0025">Alternative splicing</keyword>
<keyword id="KW-1003">Cell membrane</keyword>
<keyword id="KW-0133">Cell shape</keyword>
<keyword id="KW-0961">Cell wall biogenesis/degradation</keyword>
<keyword id="KW-0328">Glycosyltransferase</keyword>
<keyword id="KW-0472">Membrane</keyword>
<keyword id="KW-1185">Reference proteome</keyword>
<keyword id="KW-0808">Transferase</keyword>
<keyword id="KW-0812">Transmembrane</keyword>
<keyword id="KW-1133">Transmembrane helix</keyword>
<gene>
    <name type="primary">CALS3</name>
    <name type="synonym">GSL12</name>
    <name type="ordered locus">At5g13000</name>
    <name type="ORF">T24H18.170</name>
</gene>
<evidence type="ECO:0000250" key="1"/>
<evidence type="ECO:0000255" key="2"/>
<evidence type="ECO:0000305" key="3"/>
<reference key="1">
    <citation type="journal article" date="2000" name="Nature">
        <title>Sequence and analysis of chromosome 5 of the plant Arabidopsis thaliana.</title>
        <authorList>
            <person name="Tabata S."/>
            <person name="Kaneko T."/>
            <person name="Nakamura Y."/>
            <person name="Kotani H."/>
            <person name="Kato T."/>
            <person name="Asamizu E."/>
            <person name="Miyajima N."/>
            <person name="Sasamoto S."/>
            <person name="Kimura T."/>
            <person name="Hosouchi T."/>
            <person name="Kawashima K."/>
            <person name="Kohara M."/>
            <person name="Matsumoto M."/>
            <person name="Matsuno A."/>
            <person name="Muraki A."/>
            <person name="Nakayama S."/>
            <person name="Nakazaki N."/>
            <person name="Naruo K."/>
            <person name="Okumura S."/>
            <person name="Shinpo S."/>
            <person name="Takeuchi C."/>
            <person name="Wada T."/>
            <person name="Watanabe A."/>
            <person name="Yamada M."/>
            <person name="Yasuda M."/>
            <person name="Sato S."/>
            <person name="de la Bastide M."/>
            <person name="Huang E."/>
            <person name="Spiegel L."/>
            <person name="Gnoj L."/>
            <person name="O'Shaughnessy A."/>
            <person name="Preston R."/>
            <person name="Habermann K."/>
            <person name="Murray J."/>
            <person name="Johnson D."/>
            <person name="Rohlfing T."/>
            <person name="Nelson J."/>
            <person name="Stoneking T."/>
            <person name="Pepin K."/>
            <person name="Spieth J."/>
            <person name="Sekhon M."/>
            <person name="Armstrong J."/>
            <person name="Becker M."/>
            <person name="Belter E."/>
            <person name="Cordum H."/>
            <person name="Cordes M."/>
            <person name="Courtney L."/>
            <person name="Courtney W."/>
            <person name="Dante M."/>
            <person name="Du H."/>
            <person name="Edwards J."/>
            <person name="Fryman J."/>
            <person name="Haakensen B."/>
            <person name="Lamar E."/>
            <person name="Latreille P."/>
            <person name="Leonard S."/>
            <person name="Meyer R."/>
            <person name="Mulvaney E."/>
            <person name="Ozersky P."/>
            <person name="Riley A."/>
            <person name="Strowmatt C."/>
            <person name="Wagner-McPherson C."/>
            <person name="Wollam A."/>
            <person name="Yoakum M."/>
            <person name="Bell M."/>
            <person name="Dedhia N."/>
            <person name="Parnell L."/>
            <person name="Shah R."/>
            <person name="Rodriguez M."/>
            <person name="Hoon See L."/>
            <person name="Vil D."/>
            <person name="Baker J."/>
            <person name="Kirchoff K."/>
            <person name="Toth K."/>
            <person name="King L."/>
            <person name="Bahret A."/>
            <person name="Miller B."/>
            <person name="Marra M.A."/>
            <person name="Martienssen R."/>
            <person name="McCombie W.R."/>
            <person name="Wilson R.K."/>
            <person name="Murphy G."/>
            <person name="Bancroft I."/>
            <person name="Volckaert G."/>
            <person name="Wambutt R."/>
            <person name="Duesterhoeft A."/>
            <person name="Stiekema W."/>
            <person name="Pohl T."/>
            <person name="Entian K.-D."/>
            <person name="Terryn N."/>
            <person name="Hartley N."/>
            <person name="Bent E."/>
            <person name="Johnson S."/>
            <person name="Langham S.-A."/>
            <person name="McCullagh B."/>
            <person name="Robben J."/>
            <person name="Grymonprez B."/>
            <person name="Zimmermann W."/>
            <person name="Ramsperger U."/>
            <person name="Wedler H."/>
            <person name="Balke K."/>
            <person name="Wedler E."/>
            <person name="Peters S."/>
            <person name="van Staveren M."/>
            <person name="Dirkse W."/>
            <person name="Mooijman P."/>
            <person name="Klein Lankhorst R."/>
            <person name="Weitzenegger T."/>
            <person name="Bothe G."/>
            <person name="Rose M."/>
            <person name="Hauf J."/>
            <person name="Berneiser S."/>
            <person name="Hempel S."/>
            <person name="Feldpausch M."/>
            <person name="Lamberth S."/>
            <person name="Villarroel R."/>
            <person name="Gielen J."/>
            <person name="Ardiles W."/>
            <person name="Bents O."/>
            <person name="Lemcke K."/>
            <person name="Kolesov G."/>
            <person name="Mayer K.F.X."/>
            <person name="Rudd S."/>
            <person name="Schoof H."/>
            <person name="Schueller C."/>
            <person name="Zaccaria P."/>
            <person name="Mewes H.-W."/>
            <person name="Bevan M."/>
            <person name="Fransz P.F."/>
        </authorList>
    </citation>
    <scope>NUCLEOTIDE SEQUENCE [LARGE SCALE GENOMIC DNA]</scope>
    <source>
        <strain>cv. Columbia</strain>
    </source>
</reference>
<reference key="2">
    <citation type="journal article" date="2017" name="Plant J.">
        <title>Araport11: a complete reannotation of the Arabidopsis thaliana reference genome.</title>
        <authorList>
            <person name="Cheng C.Y."/>
            <person name="Krishnakumar V."/>
            <person name="Chan A.P."/>
            <person name="Thibaud-Nissen F."/>
            <person name="Schobel S."/>
            <person name="Town C.D."/>
        </authorList>
    </citation>
    <scope>GENOME REANNOTATION</scope>
    <source>
        <strain>cv. Columbia</strain>
    </source>
</reference>
<reference key="3">
    <citation type="journal article" date="2001" name="Plant Cell">
        <title>A cell plate-specific callose synthase and its interaction with phragmoplastin.</title>
        <authorList>
            <person name="Hong Z."/>
            <person name="Delauney A.J."/>
            <person name="Verma D.P.S."/>
        </authorList>
    </citation>
    <scope>GENE FAMILY</scope>
    <scope>NOMENCLATURE</scope>
</reference>
<reference key="4">
    <citation type="journal article" date="2005" name="Plant Mol. Biol.">
        <title>Two callose synthases, GSL1 and GSL5, play an essential and redundant role in plant and pollen development and in fertility.</title>
        <authorList>
            <person name="Enns L.C."/>
            <person name="Kanaoka M.M."/>
            <person name="Torii K.U."/>
            <person name="Comai L."/>
            <person name="Okada K."/>
            <person name="Cleland R.E."/>
        </authorList>
    </citation>
    <scope>NOMENCLATURE</scope>
</reference>
<dbReference type="EC" id="2.4.1.34"/>
<dbReference type="EMBL" id="AL353013">
    <property type="protein sequence ID" value="CAB88264.1"/>
    <property type="status" value="ALT_SEQ"/>
    <property type="molecule type" value="Genomic_DNA"/>
</dbReference>
<dbReference type="EMBL" id="CP002688">
    <property type="protein sequence ID" value="AED91839.1"/>
    <property type="molecule type" value="Genomic_DNA"/>
</dbReference>
<dbReference type="PIR" id="T49914">
    <property type="entry name" value="T49914"/>
</dbReference>
<dbReference type="RefSeq" id="NP_196804.6">
    <molecule id="Q9LXT9-1"/>
    <property type="nucleotide sequence ID" value="NM_121303.8"/>
</dbReference>
<dbReference type="SMR" id="Q9LXT9"/>
<dbReference type="FunCoup" id="Q9LXT9">
    <property type="interactions" value="1235"/>
</dbReference>
<dbReference type="STRING" id="3702.Q9LXT9"/>
<dbReference type="CAZy" id="GT48">
    <property type="family name" value="Glycosyltransferase Family 48"/>
</dbReference>
<dbReference type="iPTMnet" id="Q9LXT9"/>
<dbReference type="PaxDb" id="3702-AT5G13000.1"/>
<dbReference type="ProteomicsDB" id="239092">
    <molecule id="Q9LXT9-1"/>
</dbReference>
<dbReference type="EnsemblPlants" id="AT5G13000.1">
    <molecule id="Q9LXT9-1"/>
    <property type="protein sequence ID" value="AT5G13000.1"/>
    <property type="gene ID" value="AT5G13000"/>
</dbReference>
<dbReference type="GeneID" id="831140"/>
<dbReference type="Gramene" id="AT5G13000.1">
    <molecule id="Q9LXT9-1"/>
    <property type="protein sequence ID" value="AT5G13000.1"/>
    <property type="gene ID" value="AT5G13000"/>
</dbReference>
<dbReference type="KEGG" id="ath:AT5G13000"/>
<dbReference type="Araport" id="AT5G13000"/>
<dbReference type="TAIR" id="AT5G13000">
    <property type="gene designation" value="GSL12"/>
</dbReference>
<dbReference type="eggNOG" id="KOG0916">
    <property type="taxonomic scope" value="Eukaryota"/>
</dbReference>
<dbReference type="HOGENOM" id="CLU_000742_0_0_1"/>
<dbReference type="InParanoid" id="Q9LXT9"/>
<dbReference type="OrthoDB" id="1880850at2759"/>
<dbReference type="BioCyc" id="ARA:AT5G13000-MONOMER"/>
<dbReference type="PRO" id="PR:Q9LXT9"/>
<dbReference type="Proteomes" id="UP000006548">
    <property type="component" value="Chromosome 5"/>
</dbReference>
<dbReference type="ExpressionAtlas" id="Q9LXT9">
    <property type="expression patterns" value="baseline and differential"/>
</dbReference>
<dbReference type="GO" id="GO:0000148">
    <property type="term" value="C:1,3-beta-D-glucan synthase complex"/>
    <property type="evidence" value="ECO:0007669"/>
    <property type="project" value="InterPro"/>
</dbReference>
<dbReference type="GO" id="GO:0005886">
    <property type="term" value="C:plasma membrane"/>
    <property type="evidence" value="ECO:0007005"/>
    <property type="project" value="TAIR"/>
</dbReference>
<dbReference type="GO" id="GO:0003843">
    <property type="term" value="F:1,3-beta-D-glucan synthase activity"/>
    <property type="evidence" value="ECO:0007669"/>
    <property type="project" value="UniProtKB-EC"/>
</dbReference>
<dbReference type="GO" id="GO:0006075">
    <property type="term" value="P:(1-&gt;3)-beta-D-glucan biosynthetic process"/>
    <property type="evidence" value="ECO:0007669"/>
    <property type="project" value="InterPro"/>
</dbReference>
<dbReference type="GO" id="GO:0071555">
    <property type="term" value="P:cell wall organization"/>
    <property type="evidence" value="ECO:0007669"/>
    <property type="project" value="UniProtKB-KW"/>
</dbReference>
<dbReference type="GO" id="GO:0008360">
    <property type="term" value="P:regulation of cell shape"/>
    <property type="evidence" value="ECO:0007669"/>
    <property type="project" value="UniProtKB-KW"/>
</dbReference>
<dbReference type="FunFam" id="1.25.40.270:FF:000002">
    <property type="entry name" value="callose synthase 3"/>
    <property type="match status" value="1"/>
</dbReference>
<dbReference type="Gene3D" id="1.25.40.270">
    <property type="entry name" value="Vacuolar protein sorting-associated protein vta1"/>
    <property type="match status" value="1"/>
</dbReference>
<dbReference type="InterPro" id="IPR026899">
    <property type="entry name" value="FKS1-like_dom1"/>
</dbReference>
<dbReference type="InterPro" id="IPR003440">
    <property type="entry name" value="Glyco_trans_48_dom"/>
</dbReference>
<dbReference type="InterPro" id="IPR039431">
    <property type="entry name" value="Vta1/CALS_N"/>
</dbReference>
<dbReference type="InterPro" id="IPR023175">
    <property type="entry name" value="Vta1/CALS_N_sf"/>
</dbReference>
<dbReference type="PANTHER" id="PTHR12741:SF48">
    <property type="entry name" value="1,3-BETA-GLUCAN SYNTHASE COMPONENT FKS1-RELATED"/>
    <property type="match status" value="1"/>
</dbReference>
<dbReference type="PANTHER" id="PTHR12741">
    <property type="entry name" value="LYST-INTERACTING PROTEIN LIP5 DOPAMINE RESPONSIVE PROTEIN DRG-1"/>
    <property type="match status" value="1"/>
</dbReference>
<dbReference type="Pfam" id="PF14288">
    <property type="entry name" value="FKS1_dom1"/>
    <property type="match status" value="1"/>
</dbReference>
<dbReference type="Pfam" id="PF02364">
    <property type="entry name" value="Glucan_synthase"/>
    <property type="match status" value="1"/>
</dbReference>
<dbReference type="Pfam" id="PF04652">
    <property type="entry name" value="Vta1"/>
    <property type="match status" value="1"/>
</dbReference>
<dbReference type="SMART" id="SM01205">
    <property type="entry name" value="FKS1_dom1"/>
    <property type="match status" value="1"/>
</dbReference>
<comment type="function">
    <text evidence="1">Involved in callose synthesis at the forming cell plate during cytokinesis. During plant growth and development, callose is found as a transitory component of the cell plate in dividing cells, is a major component of pollen mother cell walls and pollen tubes, and is found as a structural component of plasmodesmatal canals (By similarity).</text>
</comment>
<comment type="catalytic activity">
    <reaction>
        <text>[(1-&gt;3)-beta-D-glucosyl](n) + UDP-alpha-D-glucose = [(1-&gt;3)-beta-D-glucosyl](n+1) + UDP + H(+)</text>
        <dbReference type="Rhea" id="RHEA:21476"/>
        <dbReference type="Rhea" id="RHEA-COMP:11146"/>
        <dbReference type="Rhea" id="RHEA-COMP:14303"/>
        <dbReference type="ChEBI" id="CHEBI:15378"/>
        <dbReference type="ChEBI" id="CHEBI:37671"/>
        <dbReference type="ChEBI" id="CHEBI:58223"/>
        <dbReference type="ChEBI" id="CHEBI:58885"/>
        <dbReference type="EC" id="2.4.1.34"/>
    </reaction>
</comment>
<comment type="subcellular location">
    <subcellularLocation>
        <location evidence="3">Cell membrane</location>
        <topology evidence="3">Multi-pass membrane protein</topology>
    </subcellularLocation>
</comment>
<comment type="alternative products">
    <event type="alternative splicing"/>
    <isoform>
        <id>Q9LXT9-1</id>
        <name>1</name>
        <sequence type="displayed"/>
    </isoform>
    <text>A number of isoforms are produced. According to EST sequences.</text>
</comment>
<comment type="similarity">
    <text evidence="3">Belongs to the glycosyltransferase 48 family.</text>
</comment>
<comment type="sequence caution" evidence="3">
    <conflict type="erroneous gene model prediction">
        <sequence resource="EMBL-CDS" id="CAB88264"/>
    </conflict>
</comment>
<organism>
    <name type="scientific">Arabidopsis thaliana</name>
    <name type="common">Mouse-ear cress</name>
    <dbReference type="NCBI Taxonomy" id="3702"/>
    <lineage>
        <taxon>Eukaryota</taxon>
        <taxon>Viridiplantae</taxon>
        <taxon>Streptophyta</taxon>
        <taxon>Embryophyta</taxon>
        <taxon>Tracheophyta</taxon>
        <taxon>Spermatophyta</taxon>
        <taxon>Magnoliopsida</taxon>
        <taxon>eudicotyledons</taxon>
        <taxon>Gunneridae</taxon>
        <taxon>Pentapetalae</taxon>
        <taxon>rosids</taxon>
        <taxon>malvids</taxon>
        <taxon>Brassicales</taxon>
        <taxon>Brassicaceae</taxon>
        <taxon>Camelineae</taxon>
        <taxon>Arabidopsis</taxon>
    </lineage>
</organism>
<accession>Q9LXT9</accession>
<accession>F4K2E8</accession>
<sequence length="1955" mass="226184">MSATRGGPDQGPSQPQQRRIIRTQTAGNLGESFDSEVVPSSLVEIAPILRVANEVESSNPRVAYLCRFYAFEKAHRLDPTSSGRGVRQFKTALLQRLEREHDPTLMGRVKKSDAREMQSFYQHYYKKYIQALHNAADKADRAQLTKAYQTANVLFEVLKAVNLTQSIEVDREILEAQDKVAEKTQLYVPYNILPLDPDSANQAIMRYPEIQAAVLALRNTRGLPWPEGHKKKKDEDMLDWLQEMFGFQKDNVANQREHLILLLANVHIRQFPKPDQQPKLDDQALTEVMKKLFKNYKKWCKYLGRKSSLWLPTIQQEMQQRKLLYMALYLLIWGEAANLRFMPECLCYIYHHMAFELYGMLAGNVSPMTGENVKPAYGGEEDAFLRKVVTPIYEVIQMEAQRSKKGKSKHSQWRNYDDLNEYFWSVDCFRLGWPMRADADFFCLPVAVPNTEKDGDNSKPIVARDRWVGKVNFVEIRSFWHVFRSFDRMWSFYILCLQAMIIMAWDGGQPSSVFGADVFKKVLSVFITAAIMKLGQAVLDVILNFKAHQSMTLHVKLRYILKVFSAAAWVIILPVTYAYSWKDPPAFARTIKSWFGSAMHSPSLFIIAVVSYLSPNMLAGVMFLFPLLRRFLERSNYRIVMLMMWWSQPRLYVGRGMHESAFSLFKYTMFWVLLIATKLAFSYYIEIRPLVAPTQAIMKARVTNFQWHEFFPRAKNNIGVVIALWAPIILVYFMDSQIWYAIFSTLFGGIYGAFRRLGEIRTLGMLRSRFESLPGAFNDRLIPDGKNQQKKKGIRATLSHNFTEDKVPVNKEKEAARFAQLWNTIISSFREEDLISDREMDLLLVPYWADRDLDLIQWPPFLLASKIPIALDMAKDSNGKDRELKKRIESDTYMKCAVRECYASFKNIIKFVVQGNREKEVIEIIFAEVDKHIDTGDLIQEYKMSALPSLYDHFVKLIKYLLDNKEEDRDHVVILFQDMLEVVTRDIMMEDYNISSLVDSSHGGTWHGGMIPLEQQYQLFASSGAIRFPIEPVTEAWKEKIKRIYLLLTTKESAMDVPSNLEARRRISFFSNSLFMDMPMAPKVRNMLSFSVLTPYYTEEVLFSLRDLETPNEDGVSILFYLQKIFPDEWNNFLERVKCLSEEELKESDELEEELRLWASYRGQTLTRTVRGMMYYRKALELQAFLDMAMHEDLMEGYKAVELNSENNSRGERSLWAQCQAVADMKFTYVVSCQQYGIHKRSGDPRAQDILRLMTRYPSLRVAYIDEVEEPVKDKSKKGNQKVYYSVLVKVPKSTDHSTLAQNLDQVIYRIRLPGPAILGEGKPENQNHAIIFSRGEGLQTIDMNQDNYMEEALKMRNLLQEFLTKHDGVRHPSILGLREHIFTGSVSSLAWFMSNQETSFVTIGQRLLANPLRVRFHYGHPDVFDRLFHLTRGGVSKASKVINLSEDIFAGFNSTLREGNVTHHEYIQVGKGRDVGLNQISMFEAKIANGNGEQTLSRDIYRLGHRFDFFRMMSCYFTTVGFYFSTLITVLTVYIFLYGRLYLVLSGLEQGLSTQKGIRDNTPLQIALASQSFVQIGFLMALPMLMEIGLERGFRTALSEFVLMQLQLAPVFFTFSLGTKTHYYGRTLLHGGAKYRSTGRGFVVFHAKFADNYRLYSRSHFVKGLEMMLLLVVYQIFGSAYRGVLAYLLITISMWFMVGTWLFAPFLFNPSGFEWQKIVDDWTDWNKWINNIGGIGVPAEKSWESWWEEEQEHLRYSGKRGIVVEILLALRFFIYQYGLVYHLTITEKTKNFLVYGVSWLVIFLILFVMKTVSVGRRRFSASFQLMFRLIKGLIFMTFIAIIVILITLAHMTIQDIIVCILAFMPTGWGMLLIAQACKPVVHRAGFWGSVRTLARGYEIVMGLLLFTPVAFLAWFPFVSEFQTRMLFNQAFSRGLQISRILGGHRKDRSSRNKE</sequence>
<name>CALS3_ARATH</name>